<name>CLSA_BUCAT</name>
<keyword id="KW-0997">Cell inner membrane</keyword>
<keyword id="KW-1003">Cell membrane</keyword>
<keyword id="KW-0444">Lipid biosynthesis</keyword>
<keyword id="KW-0443">Lipid metabolism</keyword>
<keyword id="KW-0472">Membrane</keyword>
<keyword id="KW-0594">Phospholipid biosynthesis</keyword>
<keyword id="KW-1208">Phospholipid metabolism</keyword>
<keyword id="KW-0677">Repeat</keyword>
<keyword id="KW-0808">Transferase</keyword>
<keyword id="KW-0812">Transmembrane</keyword>
<keyword id="KW-1133">Transmembrane helix</keyword>
<protein>
    <recommendedName>
        <fullName evidence="1">Cardiolipin synthase A</fullName>
        <shortName evidence="1">CL synthase</shortName>
        <ecNumber evidence="1">2.7.8.-</ecNumber>
    </recommendedName>
</protein>
<dbReference type="EC" id="2.7.8.-" evidence="1"/>
<dbReference type="EMBL" id="CP001158">
    <property type="protein sequence ID" value="ACL30085.1"/>
    <property type="molecule type" value="Genomic_DNA"/>
</dbReference>
<dbReference type="RefSeq" id="WP_009874227.1">
    <property type="nucleotide sequence ID" value="NC_011834.1"/>
</dbReference>
<dbReference type="SMR" id="B8D7H0"/>
<dbReference type="KEGG" id="bau:BUAPTUC7_270"/>
<dbReference type="HOGENOM" id="CLU_038053_1_0_6"/>
<dbReference type="GO" id="GO:0005886">
    <property type="term" value="C:plasma membrane"/>
    <property type="evidence" value="ECO:0007669"/>
    <property type="project" value="UniProtKB-SubCell"/>
</dbReference>
<dbReference type="GO" id="GO:0008808">
    <property type="term" value="F:cardiolipin synthase activity"/>
    <property type="evidence" value="ECO:0007669"/>
    <property type="project" value="InterPro"/>
</dbReference>
<dbReference type="GO" id="GO:0032049">
    <property type="term" value="P:cardiolipin biosynthetic process"/>
    <property type="evidence" value="ECO:0007669"/>
    <property type="project" value="InterPro"/>
</dbReference>
<dbReference type="CDD" id="cd09152">
    <property type="entry name" value="PLDc_EcCLS_like_1"/>
    <property type="match status" value="1"/>
</dbReference>
<dbReference type="CDD" id="cd09158">
    <property type="entry name" value="PLDc_EcCLS_like_2"/>
    <property type="match status" value="1"/>
</dbReference>
<dbReference type="Gene3D" id="3.30.870.10">
    <property type="entry name" value="Endonuclease Chain A"/>
    <property type="match status" value="2"/>
</dbReference>
<dbReference type="HAMAP" id="MF_00190">
    <property type="entry name" value="Cardiolipin_synth_ClsA"/>
    <property type="match status" value="1"/>
</dbReference>
<dbReference type="InterPro" id="IPR022924">
    <property type="entry name" value="Cardiolipin_synthase"/>
</dbReference>
<dbReference type="InterPro" id="IPR030840">
    <property type="entry name" value="CL_synthase_A"/>
</dbReference>
<dbReference type="InterPro" id="IPR027379">
    <property type="entry name" value="CLS_N"/>
</dbReference>
<dbReference type="InterPro" id="IPR025202">
    <property type="entry name" value="PLD-like_dom"/>
</dbReference>
<dbReference type="InterPro" id="IPR001736">
    <property type="entry name" value="PLipase_D/transphosphatidylase"/>
</dbReference>
<dbReference type="NCBIfam" id="TIGR04265">
    <property type="entry name" value="bac_cardiolipin"/>
    <property type="match status" value="1"/>
</dbReference>
<dbReference type="PANTHER" id="PTHR21248">
    <property type="entry name" value="CARDIOLIPIN SYNTHASE"/>
    <property type="match status" value="1"/>
</dbReference>
<dbReference type="PANTHER" id="PTHR21248:SF22">
    <property type="entry name" value="PHOSPHOLIPASE D"/>
    <property type="match status" value="1"/>
</dbReference>
<dbReference type="Pfam" id="PF13091">
    <property type="entry name" value="PLDc_2"/>
    <property type="match status" value="2"/>
</dbReference>
<dbReference type="Pfam" id="PF13396">
    <property type="entry name" value="PLDc_N"/>
    <property type="match status" value="1"/>
</dbReference>
<dbReference type="SMART" id="SM00155">
    <property type="entry name" value="PLDc"/>
    <property type="match status" value="2"/>
</dbReference>
<dbReference type="SUPFAM" id="SSF56024">
    <property type="entry name" value="Phospholipase D/nuclease"/>
    <property type="match status" value="2"/>
</dbReference>
<dbReference type="PROSITE" id="PS50035">
    <property type="entry name" value="PLD"/>
    <property type="match status" value="2"/>
</dbReference>
<evidence type="ECO:0000255" key="1">
    <source>
        <dbReference type="HAMAP-Rule" id="MF_00190"/>
    </source>
</evidence>
<proteinExistence type="inferred from homology"/>
<organism>
    <name type="scientific">Buchnera aphidicola subsp. Acyrthosiphon pisum (strain Tuc7)</name>
    <dbReference type="NCBI Taxonomy" id="561501"/>
    <lineage>
        <taxon>Bacteria</taxon>
        <taxon>Pseudomonadati</taxon>
        <taxon>Pseudomonadota</taxon>
        <taxon>Gammaproteobacteria</taxon>
        <taxon>Enterobacterales</taxon>
        <taxon>Erwiniaceae</taxon>
        <taxon>Buchnera</taxon>
    </lineage>
</organism>
<gene>
    <name evidence="1" type="primary">clsA</name>
    <name type="synonym">cls</name>
    <name type="ordered locus">BUAPTUC7_270</name>
</gene>
<sequence>MDIFYNLIKCLIFSTYWLLIANITFRVLIKRRNIPYSMSWLLTIYIIPFIGISIWFFFGELYLGKRQKKIANRIWSISNKWLHELKSCTYIFQIKNSEVATSIFQLCKNRQGLHGIKSKKIKLLTNTKKIMQILIRDIYLARKNIEMVFYIWKPGGMADDVAIALIDSAKRGIHCRLMLDSAGSIEFFQSPWVEIMRKSGIQVVEALKVNLLRVFLRRVDVRQHRKIILIDNYIAYSGSMNLVDPYLFKKSSGIGQWIDLMTRIEGPIATTMGIIYSCDWEIETGLKILPQLPNKKMLENQSNKNASIQVIASGPGFLKNMIHQALLTAIYSAKRELIITTPYLVPSEDLLEAICTAAQRGVEVSIIIPLYHDSILVKWASRVFFSELLEAGVKIFQFQKGLLHSKSILVDQQLSLIGTVNLDMRSLWLNFEITLVIDDSDFGRNLFCIQNKYISDSQLIDKKAWSMRAYWKRILEKIFYFLSPLL</sequence>
<feature type="chain" id="PRO_1000124265" description="Cardiolipin synthase A">
    <location>
        <begin position="1"/>
        <end position="486"/>
    </location>
</feature>
<feature type="transmembrane region" description="Helical" evidence="1">
    <location>
        <begin position="3"/>
        <end position="23"/>
    </location>
</feature>
<feature type="transmembrane region" description="Helical" evidence="1">
    <location>
        <begin position="38"/>
        <end position="58"/>
    </location>
</feature>
<feature type="domain" description="PLD phosphodiesterase 1" evidence="1">
    <location>
        <begin position="219"/>
        <end position="246"/>
    </location>
</feature>
<feature type="domain" description="PLD phosphodiesterase 2" evidence="1">
    <location>
        <begin position="399"/>
        <end position="426"/>
    </location>
</feature>
<feature type="active site" evidence="1">
    <location>
        <position position="224"/>
    </location>
</feature>
<feature type="active site" evidence="1">
    <location>
        <position position="226"/>
    </location>
</feature>
<feature type="active site" evidence="1">
    <location>
        <position position="231"/>
    </location>
</feature>
<feature type="active site" evidence="1">
    <location>
        <position position="404"/>
    </location>
</feature>
<feature type="active site" evidence="1">
    <location>
        <position position="406"/>
    </location>
</feature>
<feature type="active site" evidence="1">
    <location>
        <position position="411"/>
    </location>
</feature>
<reference key="1">
    <citation type="journal article" date="2009" name="Science">
        <title>The dynamics and time scale of ongoing genomic erosion in symbiotic bacteria.</title>
        <authorList>
            <person name="Moran N.A."/>
            <person name="McLaughlin H.J."/>
            <person name="Sorek R."/>
        </authorList>
    </citation>
    <scope>NUCLEOTIDE SEQUENCE [LARGE SCALE GENOMIC DNA]</scope>
    <source>
        <strain>Tuc7</strain>
    </source>
</reference>
<accession>B8D7H0</accession>
<comment type="function">
    <text evidence="1">Catalyzes the reversible phosphatidyl group transfer from one phosphatidylglycerol molecule to another to form cardiolipin (CL) (diphosphatidylglycerol) and glycerol.</text>
</comment>
<comment type="catalytic activity">
    <reaction evidence="1">
        <text>2 a 1,2-diacyl-sn-glycero-3-phospho-(1'-sn-glycerol) = a cardiolipin + glycerol</text>
        <dbReference type="Rhea" id="RHEA:31451"/>
        <dbReference type="ChEBI" id="CHEBI:17754"/>
        <dbReference type="ChEBI" id="CHEBI:62237"/>
        <dbReference type="ChEBI" id="CHEBI:64716"/>
    </reaction>
</comment>
<comment type="subcellular location">
    <subcellularLocation>
        <location evidence="1">Cell inner membrane</location>
        <topology evidence="1">Multi-pass membrane protein</topology>
    </subcellularLocation>
</comment>
<comment type="similarity">
    <text evidence="1">Belongs to the phospholipase D family. Cardiolipin synthase subfamily. ClsA sub-subfamily.</text>
</comment>